<dbReference type="EC" id="6.1.1.20" evidence="1"/>
<dbReference type="EMBL" id="AE015451">
    <property type="protein sequence ID" value="AAN68081.1"/>
    <property type="molecule type" value="Genomic_DNA"/>
</dbReference>
<dbReference type="RefSeq" id="NP_744617.1">
    <property type="nucleotide sequence ID" value="NC_002947.4"/>
</dbReference>
<dbReference type="RefSeq" id="WP_003250674.1">
    <property type="nucleotide sequence ID" value="NZ_CP169744.1"/>
</dbReference>
<dbReference type="SMR" id="Q88K23"/>
<dbReference type="STRING" id="160488.PP_2469"/>
<dbReference type="PaxDb" id="160488-PP_2469"/>
<dbReference type="GeneID" id="83681010"/>
<dbReference type="KEGG" id="ppu:PP_2469"/>
<dbReference type="PATRIC" id="fig|160488.4.peg.2615"/>
<dbReference type="eggNOG" id="COG0016">
    <property type="taxonomic scope" value="Bacteria"/>
</dbReference>
<dbReference type="HOGENOM" id="CLU_025086_0_1_6"/>
<dbReference type="OrthoDB" id="9800719at2"/>
<dbReference type="PhylomeDB" id="Q88K23"/>
<dbReference type="BioCyc" id="PPUT160488:G1G01-2640-MONOMER"/>
<dbReference type="Proteomes" id="UP000000556">
    <property type="component" value="Chromosome"/>
</dbReference>
<dbReference type="GO" id="GO:0005737">
    <property type="term" value="C:cytoplasm"/>
    <property type="evidence" value="ECO:0007669"/>
    <property type="project" value="UniProtKB-SubCell"/>
</dbReference>
<dbReference type="GO" id="GO:0005524">
    <property type="term" value="F:ATP binding"/>
    <property type="evidence" value="ECO:0007669"/>
    <property type="project" value="UniProtKB-UniRule"/>
</dbReference>
<dbReference type="GO" id="GO:0000287">
    <property type="term" value="F:magnesium ion binding"/>
    <property type="evidence" value="ECO:0007669"/>
    <property type="project" value="UniProtKB-UniRule"/>
</dbReference>
<dbReference type="GO" id="GO:0004826">
    <property type="term" value="F:phenylalanine-tRNA ligase activity"/>
    <property type="evidence" value="ECO:0007669"/>
    <property type="project" value="UniProtKB-UniRule"/>
</dbReference>
<dbReference type="GO" id="GO:0000049">
    <property type="term" value="F:tRNA binding"/>
    <property type="evidence" value="ECO:0007669"/>
    <property type="project" value="InterPro"/>
</dbReference>
<dbReference type="GO" id="GO:0006432">
    <property type="term" value="P:phenylalanyl-tRNA aminoacylation"/>
    <property type="evidence" value="ECO:0007669"/>
    <property type="project" value="UniProtKB-UniRule"/>
</dbReference>
<dbReference type="CDD" id="cd00496">
    <property type="entry name" value="PheRS_alpha_core"/>
    <property type="match status" value="1"/>
</dbReference>
<dbReference type="FunFam" id="3.30.930.10:FF:000003">
    <property type="entry name" value="Phenylalanine--tRNA ligase alpha subunit"/>
    <property type="match status" value="1"/>
</dbReference>
<dbReference type="Gene3D" id="3.30.930.10">
    <property type="entry name" value="Bira Bifunctional Protein, Domain 2"/>
    <property type="match status" value="1"/>
</dbReference>
<dbReference type="HAMAP" id="MF_00281">
    <property type="entry name" value="Phe_tRNA_synth_alpha1"/>
    <property type="match status" value="1"/>
</dbReference>
<dbReference type="InterPro" id="IPR006195">
    <property type="entry name" value="aa-tRNA-synth_II"/>
</dbReference>
<dbReference type="InterPro" id="IPR045864">
    <property type="entry name" value="aa-tRNA-synth_II/BPL/LPL"/>
</dbReference>
<dbReference type="InterPro" id="IPR004529">
    <property type="entry name" value="Phe-tRNA-synth_IIc_asu"/>
</dbReference>
<dbReference type="InterPro" id="IPR004188">
    <property type="entry name" value="Phe-tRNA_ligase_II_N"/>
</dbReference>
<dbReference type="InterPro" id="IPR022911">
    <property type="entry name" value="Phe_tRNA_ligase_alpha1_bac"/>
</dbReference>
<dbReference type="InterPro" id="IPR002319">
    <property type="entry name" value="Phenylalanyl-tRNA_Synthase"/>
</dbReference>
<dbReference type="InterPro" id="IPR010978">
    <property type="entry name" value="tRNA-bd_arm"/>
</dbReference>
<dbReference type="NCBIfam" id="TIGR00468">
    <property type="entry name" value="pheS"/>
    <property type="match status" value="1"/>
</dbReference>
<dbReference type="PANTHER" id="PTHR11538:SF41">
    <property type="entry name" value="PHENYLALANINE--TRNA LIGASE, MITOCHONDRIAL"/>
    <property type="match status" value="1"/>
</dbReference>
<dbReference type="PANTHER" id="PTHR11538">
    <property type="entry name" value="PHENYLALANYL-TRNA SYNTHETASE"/>
    <property type="match status" value="1"/>
</dbReference>
<dbReference type="Pfam" id="PF02912">
    <property type="entry name" value="Phe_tRNA-synt_N"/>
    <property type="match status" value="1"/>
</dbReference>
<dbReference type="Pfam" id="PF01409">
    <property type="entry name" value="tRNA-synt_2d"/>
    <property type="match status" value="1"/>
</dbReference>
<dbReference type="SUPFAM" id="SSF55681">
    <property type="entry name" value="Class II aaRS and biotin synthetases"/>
    <property type="match status" value="1"/>
</dbReference>
<dbReference type="SUPFAM" id="SSF46589">
    <property type="entry name" value="tRNA-binding arm"/>
    <property type="match status" value="1"/>
</dbReference>
<dbReference type="PROSITE" id="PS50862">
    <property type="entry name" value="AA_TRNA_LIGASE_II"/>
    <property type="match status" value="1"/>
</dbReference>
<protein>
    <recommendedName>
        <fullName evidence="1">Phenylalanine--tRNA ligase alpha subunit</fullName>
        <ecNumber evidence="1">6.1.1.20</ecNumber>
    </recommendedName>
    <alternativeName>
        <fullName evidence="1">Phenylalanyl-tRNA synthetase alpha subunit</fullName>
        <shortName evidence="1">PheRS</shortName>
    </alternativeName>
</protein>
<keyword id="KW-0030">Aminoacyl-tRNA synthetase</keyword>
<keyword id="KW-0067">ATP-binding</keyword>
<keyword id="KW-0963">Cytoplasm</keyword>
<keyword id="KW-0436">Ligase</keyword>
<keyword id="KW-0460">Magnesium</keyword>
<keyword id="KW-0479">Metal-binding</keyword>
<keyword id="KW-0547">Nucleotide-binding</keyword>
<keyword id="KW-0648">Protein biosynthesis</keyword>
<keyword id="KW-1185">Reference proteome</keyword>
<proteinExistence type="inferred from homology"/>
<evidence type="ECO:0000255" key="1">
    <source>
        <dbReference type="HAMAP-Rule" id="MF_00281"/>
    </source>
</evidence>
<accession>Q88K23</accession>
<comment type="catalytic activity">
    <reaction evidence="1">
        <text>tRNA(Phe) + L-phenylalanine + ATP = L-phenylalanyl-tRNA(Phe) + AMP + diphosphate + H(+)</text>
        <dbReference type="Rhea" id="RHEA:19413"/>
        <dbReference type="Rhea" id="RHEA-COMP:9668"/>
        <dbReference type="Rhea" id="RHEA-COMP:9699"/>
        <dbReference type="ChEBI" id="CHEBI:15378"/>
        <dbReference type="ChEBI" id="CHEBI:30616"/>
        <dbReference type="ChEBI" id="CHEBI:33019"/>
        <dbReference type="ChEBI" id="CHEBI:58095"/>
        <dbReference type="ChEBI" id="CHEBI:78442"/>
        <dbReference type="ChEBI" id="CHEBI:78531"/>
        <dbReference type="ChEBI" id="CHEBI:456215"/>
        <dbReference type="EC" id="6.1.1.20"/>
    </reaction>
</comment>
<comment type="cofactor">
    <cofactor evidence="1">
        <name>Mg(2+)</name>
        <dbReference type="ChEBI" id="CHEBI:18420"/>
    </cofactor>
    <text evidence="1">Binds 2 magnesium ions per tetramer.</text>
</comment>
<comment type="subunit">
    <text evidence="1">Tetramer of two alpha and two beta subunits.</text>
</comment>
<comment type="subcellular location">
    <subcellularLocation>
        <location evidence="1">Cytoplasm</location>
    </subcellularLocation>
</comment>
<comment type="similarity">
    <text evidence="1">Belongs to the class-II aminoacyl-tRNA synthetase family. Phe-tRNA synthetase alpha subunit type 1 subfamily.</text>
</comment>
<organism>
    <name type="scientific">Pseudomonas putida (strain ATCC 47054 / DSM 6125 / CFBP 8728 / NCIMB 11950 / KT2440)</name>
    <dbReference type="NCBI Taxonomy" id="160488"/>
    <lineage>
        <taxon>Bacteria</taxon>
        <taxon>Pseudomonadati</taxon>
        <taxon>Pseudomonadota</taxon>
        <taxon>Gammaproteobacteria</taxon>
        <taxon>Pseudomonadales</taxon>
        <taxon>Pseudomonadaceae</taxon>
        <taxon>Pseudomonas</taxon>
    </lineage>
</organism>
<gene>
    <name evidence="1" type="primary">pheS</name>
    <name type="ordered locus">PP_2469</name>
</gene>
<feature type="chain" id="PRO_0000126745" description="Phenylalanine--tRNA ligase alpha subunit">
    <location>
        <begin position="1"/>
        <end position="338"/>
    </location>
</feature>
<feature type="binding site" evidence="1">
    <location>
        <position position="252"/>
    </location>
    <ligand>
        <name>Mg(2+)</name>
        <dbReference type="ChEBI" id="CHEBI:18420"/>
        <note>shared with beta subunit</note>
    </ligand>
</feature>
<reference key="1">
    <citation type="journal article" date="2002" name="Environ. Microbiol.">
        <title>Complete genome sequence and comparative analysis of the metabolically versatile Pseudomonas putida KT2440.</title>
        <authorList>
            <person name="Nelson K.E."/>
            <person name="Weinel C."/>
            <person name="Paulsen I.T."/>
            <person name="Dodson R.J."/>
            <person name="Hilbert H."/>
            <person name="Martins dos Santos V.A.P."/>
            <person name="Fouts D.E."/>
            <person name="Gill S.R."/>
            <person name="Pop M."/>
            <person name="Holmes M."/>
            <person name="Brinkac L.M."/>
            <person name="Beanan M.J."/>
            <person name="DeBoy R.T."/>
            <person name="Daugherty S.C."/>
            <person name="Kolonay J.F."/>
            <person name="Madupu R."/>
            <person name="Nelson W.C."/>
            <person name="White O."/>
            <person name="Peterson J.D."/>
            <person name="Khouri H.M."/>
            <person name="Hance I."/>
            <person name="Chris Lee P."/>
            <person name="Holtzapple E.K."/>
            <person name="Scanlan D."/>
            <person name="Tran K."/>
            <person name="Moazzez A."/>
            <person name="Utterback T.R."/>
            <person name="Rizzo M."/>
            <person name="Lee K."/>
            <person name="Kosack D."/>
            <person name="Moestl D."/>
            <person name="Wedler H."/>
            <person name="Lauber J."/>
            <person name="Stjepandic D."/>
            <person name="Hoheisel J."/>
            <person name="Straetz M."/>
            <person name="Heim S."/>
            <person name="Kiewitz C."/>
            <person name="Eisen J.A."/>
            <person name="Timmis K.N."/>
            <person name="Duesterhoeft A."/>
            <person name="Tuemmler B."/>
            <person name="Fraser C.M."/>
        </authorList>
    </citation>
    <scope>NUCLEOTIDE SEQUENCE [LARGE SCALE GENOMIC DNA]</scope>
    <source>
        <strain>ATCC 47054 / DSM 6125 / CFBP 8728 / NCIMB 11950 / KT2440</strain>
    </source>
</reference>
<name>SYFA_PSEPK</name>
<sequence length="338" mass="38083">MENLDALVSQALEAVERAEDINALEQIRVNYLGKKGELTQVMKTLGNLPAEERPKVGALINDAKERVTVVLNARKAAFEEAELSARLAAECIDVTLPGRGQATGGLHPITRTLERIEQFFTHIGYGIAEGPEVEDDYHNFEALNIPGHHPARAMHDTFYFNANMLLRTHTSPVQVRTMESTQPPIRIVCPGRVYRCDSDITHSPMFHQVEGLLIDRDINFADLKGTIEEFLRVFFEKELAVRFRPSFFPFTEPSAEVDIQCVMCSGNGCRVCKQTGWLEVMGCGMVHPNVLRMSGIDPEEFQGFAFGMGAERLAMLRYGVNDLRLFFDNDLRFLAQFR</sequence>